<sequence length="89" mass="10134">MSRKCPLTGKRPRRGNSYTIRGIAKKKKGIGLKVTGKTKRRFFPNMVTKRLWSTEENKFLKLKISASALRLIDKLGLEKVIARAKSKGF</sequence>
<dbReference type="EMBL" id="AP006861">
    <property type="protein sequence ID" value="BAE81324.1"/>
    <property type="molecule type" value="Genomic_DNA"/>
</dbReference>
<dbReference type="RefSeq" id="WP_011458104.1">
    <property type="nucleotide sequence ID" value="NC_007899.1"/>
</dbReference>
<dbReference type="SMR" id="Q254G4"/>
<dbReference type="STRING" id="264202.CF0552"/>
<dbReference type="KEGG" id="cfe:CF0552"/>
<dbReference type="eggNOG" id="COG0227">
    <property type="taxonomic scope" value="Bacteria"/>
</dbReference>
<dbReference type="HOGENOM" id="CLU_064548_3_2_0"/>
<dbReference type="OrthoDB" id="9805609at2"/>
<dbReference type="Proteomes" id="UP000001260">
    <property type="component" value="Chromosome"/>
</dbReference>
<dbReference type="GO" id="GO:1990904">
    <property type="term" value="C:ribonucleoprotein complex"/>
    <property type="evidence" value="ECO:0007669"/>
    <property type="project" value="UniProtKB-KW"/>
</dbReference>
<dbReference type="GO" id="GO:0005840">
    <property type="term" value="C:ribosome"/>
    <property type="evidence" value="ECO:0007669"/>
    <property type="project" value="UniProtKB-KW"/>
</dbReference>
<dbReference type="GO" id="GO:0003735">
    <property type="term" value="F:structural constituent of ribosome"/>
    <property type="evidence" value="ECO:0007669"/>
    <property type="project" value="InterPro"/>
</dbReference>
<dbReference type="GO" id="GO:0006412">
    <property type="term" value="P:translation"/>
    <property type="evidence" value="ECO:0007669"/>
    <property type="project" value="UniProtKB-UniRule"/>
</dbReference>
<dbReference type="Gene3D" id="2.30.170.40">
    <property type="entry name" value="Ribosomal protein L28/L24"/>
    <property type="match status" value="1"/>
</dbReference>
<dbReference type="HAMAP" id="MF_00373">
    <property type="entry name" value="Ribosomal_bL28"/>
    <property type="match status" value="1"/>
</dbReference>
<dbReference type="InterPro" id="IPR026569">
    <property type="entry name" value="Ribosomal_bL28"/>
</dbReference>
<dbReference type="InterPro" id="IPR034704">
    <property type="entry name" value="Ribosomal_bL28/bL31-like_sf"/>
</dbReference>
<dbReference type="InterPro" id="IPR001383">
    <property type="entry name" value="Ribosomal_bL28_bact-type"/>
</dbReference>
<dbReference type="InterPro" id="IPR037147">
    <property type="entry name" value="Ribosomal_bL28_sf"/>
</dbReference>
<dbReference type="NCBIfam" id="TIGR00009">
    <property type="entry name" value="L28"/>
    <property type="match status" value="1"/>
</dbReference>
<dbReference type="PANTHER" id="PTHR13528">
    <property type="entry name" value="39S RIBOSOMAL PROTEIN L28, MITOCHONDRIAL"/>
    <property type="match status" value="1"/>
</dbReference>
<dbReference type="PANTHER" id="PTHR13528:SF2">
    <property type="entry name" value="LARGE RIBOSOMAL SUBUNIT PROTEIN BL28M"/>
    <property type="match status" value="1"/>
</dbReference>
<dbReference type="Pfam" id="PF00830">
    <property type="entry name" value="Ribosomal_L28"/>
    <property type="match status" value="1"/>
</dbReference>
<dbReference type="SUPFAM" id="SSF143800">
    <property type="entry name" value="L28p-like"/>
    <property type="match status" value="1"/>
</dbReference>
<name>RL28_CHLFF</name>
<gene>
    <name evidence="1" type="primary">rpmB</name>
    <name type="ordered locus">CF0552</name>
</gene>
<protein>
    <recommendedName>
        <fullName evidence="1">Large ribosomal subunit protein bL28</fullName>
    </recommendedName>
    <alternativeName>
        <fullName evidence="2">50S ribosomal protein L28</fullName>
    </alternativeName>
</protein>
<organism>
    <name type="scientific">Chlamydia felis (strain Fe/C-56)</name>
    <name type="common">Chlamydophila felis</name>
    <dbReference type="NCBI Taxonomy" id="264202"/>
    <lineage>
        <taxon>Bacteria</taxon>
        <taxon>Pseudomonadati</taxon>
        <taxon>Chlamydiota</taxon>
        <taxon>Chlamydiia</taxon>
        <taxon>Chlamydiales</taxon>
        <taxon>Chlamydiaceae</taxon>
        <taxon>Chlamydia/Chlamydophila group</taxon>
        <taxon>Chlamydia</taxon>
    </lineage>
</organism>
<keyword id="KW-0687">Ribonucleoprotein</keyword>
<keyword id="KW-0689">Ribosomal protein</keyword>
<comment type="similarity">
    <text evidence="1">Belongs to the bacterial ribosomal protein bL28 family.</text>
</comment>
<accession>Q254G4</accession>
<evidence type="ECO:0000255" key="1">
    <source>
        <dbReference type="HAMAP-Rule" id="MF_00373"/>
    </source>
</evidence>
<evidence type="ECO:0000305" key="2"/>
<reference key="1">
    <citation type="journal article" date="2006" name="DNA Res.">
        <title>Genome sequence of the cat pathogen, Chlamydophila felis.</title>
        <authorList>
            <person name="Azuma Y."/>
            <person name="Hirakawa H."/>
            <person name="Yamashita A."/>
            <person name="Cai Y."/>
            <person name="Rahman M.A."/>
            <person name="Suzuki H."/>
            <person name="Mitaku S."/>
            <person name="Toh H."/>
            <person name="Goto S."/>
            <person name="Murakami T."/>
            <person name="Sugi K."/>
            <person name="Hayashi H."/>
            <person name="Fukushi H."/>
            <person name="Hattori M."/>
            <person name="Kuhara S."/>
            <person name="Shirai M."/>
        </authorList>
    </citation>
    <scope>NUCLEOTIDE SEQUENCE [LARGE SCALE GENOMIC DNA]</scope>
    <source>
        <strain>Fe/C-56</strain>
    </source>
</reference>
<proteinExistence type="inferred from homology"/>
<feature type="chain" id="PRO_1000007206" description="Large ribosomal subunit protein bL28">
    <location>
        <begin position="1"/>
        <end position="89"/>
    </location>
</feature>